<organismHost>
    <name type="scientific">Capsicum annuum</name>
    <name type="common">Capsicum pepper</name>
    <dbReference type="NCBI Taxonomy" id="4072"/>
</organismHost>
<organismHost>
    <name type="scientific">Myzus</name>
    <dbReference type="NCBI Taxonomy" id="13163"/>
</organismHost>
<organismHost>
    <name type="scientific">Petunia</name>
    <dbReference type="NCBI Taxonomy" id="4101"/>
</organismHost>
<organismHost>
    <name type="scientific">Spinacia oleracea</name>
    <name type="common">Spinach</name>
    <dbReference type="NCBI Taxonomy" id="3562"/>
</organismHost>
<organismHost>
    <name type="scientific">Vicia faba</name>
    <name type="common">Broad bean</name>
    <name type="synonym">Faba vulgaris</name>
    <dbReference type="NCBI Taxonomy" id="3906"/>
</organismHost>
<comment type="function">
    <molecule>Picornain 3C-like protease</molecule>
    <text evidence="1">Thiol protease that cleaves the RNA1 and RNA2 polyproteins.</text>
</comment>
<comment type="function">
    <molecule>Viral genome-linked protein</molecule>
    <text evidence="1">Plays a role in RNA replication. It is covalently linked to the 5'terminus of both viral single-stranded RNA1 and RNA2 molecules.</text>
</comment>
<comment type="function">
    <molecule>Protease cofactor</molecule>
    <text evidence="1">Down-regulates the RNA1 polyprotein processing and enhances trans-cleavage of RNA2 polyproteins. The protease cofactor and the putative helicase seem to target the replication complexes to ER membranes. Their physical association causes the membrane rearrangement of host ER that may result in formation of the small membranous vesicles that are the site of viral RNA synthesis.</text>
</comment>
<comment type="function">
    <molecule>Putative helicase</molecule>
    <text evidence="1">The protease cofactor and the putative helicase seem to target the replication complexes to ER membranes. Their physical association causes the membrane rearrangement of host ER that may result in formation of the small membranous vesicles that are the site of viral RNA synthesis.</text>
</comment>
<comment type="function">
    <molecule>RNA-directed RNA polymerase</molecule>
    <text evidence="1">Replicates the viral genome.</text>
</comment>
<comment type="catalytic activity">
    <reaction evidence="3">
        <text>RNA(n) + a ribonucleoside 5'-triphosphate = RNA(n+1) + diphosphate</text>
        <dbReference type="Rhea" id="RHEA:21248"/>
        <dbReference type="Rhea" id="RHEA-COMP:14527"/>
        <dbReference type="Rhea" id="RHEA-COMP:17342"/>
        <dbReference type="ChEBI" id="CHEBI:33019"/>
        <dbReference type="ChEBI" id="CHEBI:61557"/>
        <dbReference type="ChEBI" id="CHEBI:140395"/>
        <dbReference type="EC" id="2.7.7.48"/>
    </reaction>
</comment>
<comment type="subcellular location">
    <molecule>Putative helicase</molecule>
    <subcellularLocation>
        <location evidence="1">Host membrane</location>
        <topology evidence="1">Single-pass membrane protein</topology>
    </subcellularLocation>
    <subcellularLocation>
        <location evidence="1">Host cytoplasm</location>
        <location evidence="1">Host perinuclear region</location>
    </subcellularLocation>
</comment>
<comment type="subcellular location">
    <molecule>RNA-directed RNA polymerase</molecule>
    <subcellularLocation>
        <location evidence="1">Host endoplasmic reticulum</location>
    </subcellularLocation>
</comment>
<comment type="subcellular location">
    <molecule>Protease cofactor</molecule>
    <subcellularLocation>
        <location evidence="1">Host cytoplasm</location>
        <location evidence="1">Host perinuclear region</location>
    </subcellularLocation>
</comment>
<comment type="PTM">
    <molecule>RNA1 polyprotein</molecule>
    <text evidence="1">Specific enzymatic cleavages by picornain 3C-like protease in vivo yield mature proteins. Picornain 3C-like protease is autocatalytically processed.</text>
</comment>
<comment type="PTM">
    <molecule>Viral genome-linked protein</molecule>
    <text evidence="1">Uridylylated by the polymerase and is covalently linked to the 5'-end of genomic RNA. This uridylylated form acts as a nucleotide-peptide primer for the polymerase.</text>
</comment>
<accession>Q76L40</accession>
<feature type="chain" id="PRO_0000402781" description="RNA1 polyprotein">
    <location>
        <begin position="1"/>
        <end position="1842"/>
    </location>
</feature>
<feature type="chain" id="PRO_0000402782" description="Protease cofactor">
    <location>
        <begin position="1"/>
        <end position="318"/>
    </location>
</feature>
<feature type="chain" id="PRO_0000402783" description="Putative helicase">
    <location>
        <begin position="319"/>
        <end position="908"/>
    </location>
</feature>
<feature type="chain" id="PRO_0000402784" description="Viral genome-linked protein">
    <location>
        <begin position="909"/>
        <end position="934"/>
    </location>
</feature>
<feature type="chain" id="PRO_0000402785" description="Picornain 3C-like protease">
    <location>
        <begin position="935"/>
        <end position="1143"/>
    </location>
</feature>
<feature type="chain" id="PRO_0000402786" description="RNA-directed RNA polymerase">
    <location>
        <begin position="1144"/>
        <end position="1842"/>
    </location>
</feature>
<feature type="transmembrane region" description="Helical" evidence="2">
    <location>
        <begin position="883"/>
        <end position="903"/>
    </location>
</feature>
<feature type="domain" description="SF3 helicase" evidence="4">
    <location>
        <begin position="458"/>
        <end position="626"/>
    </location>
</feature>
<feature type="domain" description="Peptidase C3" evidence="5">
    <location>
        <begin position="935"/>
        <end position="1137"/>
    </location>
</feature>
<feature type="domain" description="RdRp catalytic" evidence="3">
    <location>
        <begin position="1417"/>
        <end position="1544"/>
    </location>
</feature>
<feature type="active site" description="For picornain 3C-like protease activity" evidence="5">
    <location>
        <position position="975"/>
    </location>
</feature>
<feature type="active site" description="For picornain 3C-like protease activity" evidence="5">
    <location>
        <position position="1011"/>
    </location>
</feature>
<feature type="active site" description="For picornain 3C-like protease activity" evidence="5">
    <location>
        <position position="1100"/>
    </location>
</feature>
<feature type="binding site" evidence="4">
    <location>
        <begin position="487"/>
        <end position="494"/>
    </location>
    <ligand>
        <name>ATP</name>
        <dbReference type="ChEBI" id="CHEBI:30616"/>
    </ligand>
</feature>
<feature type="site" description="Cleavage; by viral protease" evidence="1">
    <location>
        <begin position="318"/>
        <end position="319"/>
    </location>
</feature>
<feature type="site" description="Cleavage; by viral protease" evidence="1">
    <location>
        <begin position="908"/>
        <end position="909"/>
    </location>
</feature>
<feature type="site" description="Cleavage; by viral protease" evidence="1">
    <location>
        <begin position="934"/>
        <end position="935"/>
    </location>
</feature>
<feature type="site" description="Cleavage; by viral protease" evidence="1">
    <location>
        <begin position="1143"/>
        <end position="1144"/>
    </location>
</feature>
<feature type="modified residue" description="O-(5'-phospho-RNA)-serine" evidence="1">
    <location>
        <position position="909"/>
    </location>
</feature>
<name>POL1_BBWVS</name>
<dbReference type="EC" id="3.6.4.-"/>
<dbReference type="EC" id="3.4.22.-" evidence="1"/>
<dbReference type="EC" id="2.7.7.48" evidence="3"/>
<dbReference type="EMBL" id="AB084450">
    <property type="protein sequence ID" value="BAD00183.1"/>
    <property type="molecule type" value="Genomic_RNA"/>
</dbReference>
<dbReference type="RefSeq" id="NP_945134.1">
    <property type="nucleotide sequence ID" value="NC_005289.1"/>
</dbReference>
<dbReference type="SMR" id="Q76L40"/>
<dbReference type="GeneID" id="2658942"/>
<dbReference type="KEGG" id="vg:2658942"/>
<dbReference type="Proteomes" id="UP000000409">
    <property type="component" value="Genome"/>
</dbReference>
<dbReference type="GO" id="GO:0044165">
    <property type="term" value="C:host cell endoplasmic reticulum"/>
    <property type="evidence" value="ECO:0007669"/>
    <property type="project" value="UniProtKB-SubCell"/>
</dbReference>
<dbReference type="GO" id="GO:0033644">
    <property type="term" value="C:host cell membrane"/>
    <property type="evidence" value="ECO:0007669"/>
    <property type="project" value="UniProtKB-SubCell"/>
</dbReference>
<dbReference type="GO" id="GO:0044220">
    <property type="term" value="C:host cell perinuclear region of cytoplasm"/>
    <property type="evidence" value="ECO:0007669"/>
    <property type="project" value="UniProtKB-SubCell"/>
</dbReference>
<dbReference type="GO" id="GO:0016020">
    <property type="term" value="C:membrane"/>
    <property type="evidence" value="ECO:0007669"/>
    <property type="project" value="UniProtKB-KW"/>
</dbReference>
<dbReference type="GO" id="GO:0005524">
    <property type="term" value="F:ATP binding"/>
    <property type="evidence" value="ECO:0007669"/>
    <property type="project" value="UniProtKB-KW"/>
</dbReference>
<dbReference type="GO" id="GO:0004197">
    <property type="term" value="F:cysteine-type endopeptidase activity"/>
    <property type="evidence" value="ECO:0007669"/>
    <property type="project" value="InterPro"/>
</dbReference>
<dbReference type="GO" id="GO:0003723">
    <property type="term" value="F:RNA binding"/>
    <property type="evidence" value="ECO:0007669"/>
    <property type="project" value="InterPro"/>
</dbReference>
<dbReference type="GO" id="GO:0003724">
    <property type="term" value="F:RNA helicase activity"/>
    <property type="evidence" value="ECO:0007669"/>
    <property type="project" value="InterPro"/>
</dbReference>
<dbReference type="GO" id="GO:0003968">
    <property type="term" value="F:RNA-directed RNA polymerase activity"/>
    <property type="evidence" value="ECO:0007669"/>
    <property type="project" value="UniProtKB-KW"/>
</dbReference>
<dbReference type="GO" id="GO:0006351">
    <property type="term" value="P:DNA-templated transcription"/>
    <property type="evidence" value="ECO:0007669"/>
    <property type="project" value="InterPro"/>
</dbReference>
<dbReference type="GO" id="GO:0006508">
    <property type="term" value="P:proteolysis"/>
    <property type="evidence" value="ECO:0007669"/>
    <property type="project" value="UniProtKB-KW"/>
</dbReference>
<dbReference type="GO" id="GO:0039694">
    <property type="term" value="P:viral RNA genome replication"/>
    <property type="evidence" value="ECO:0007669"/>
    <property type="project" value="InterPro"/>
</dbReference>
<dbReference type="Gene3D" id="3.30.70.270">
    <property type="match status" value="1"/>
</dbReference>
<dbReference type="Gene3D" id="2.40.10.10">
    <property type="entry name" value="Trypsin-like serine proteases"/>
    <property type="match status" value="1"/>
</dbReference>
<dbReference type="InterPro" id="IPR043502">
    <property type="entry name" value="DNA/RNA_pol_sf"/>
</dbReference>
<dbReference type="InterPro" id="IPR004004">
    <property type="entry name" value="Helic/Pol/Pept_Calicivir-typ"/>
</dbReference>
<dbReference type="InterPro" id="IPR000605">
    <property type="entry name" value="Helicase_SF3_ssDNA/RNA_vir"/>
</dbReference>
<dbReference type="InterPro" id="IPR014759">
    <property type="entry name" value="Helicase_SF3_ssRNA_vir"/>
</dbReference>
<dbReference type="InterPro" id="IPR044067">
    <property type="entry name" value="PCV_3C_PRO"/>
</dbReference>
<dbReference type="InterPro" id="IPR000199">
    <property type="entry name" value="Peptidase_C3A/C3B_picornavir"/>
</dbReference>
<dbReference type="InterPro" id="IPR009003">
    <property type="entry name" value="Peptidase_S1_PA"/>
</dbReference>
<dbReference type="InterPro" id="IPR043504">
    <property type="entry name" value="Peptidase_S1_PA_chymotrypsin"/>
</dbReference>
<dbReference type="InterPro" id="IPR043128">
    <property type="entry name" value="Rev_trsase/Diguanyl_cyclase"/>
</dbReference>
<dbReference type="InterPro" id="IPR001205">
    <property type="entry name" value="RNA-dir_pol_C"/>
</dbReference>
<dbReference type="InterPro" id="IPR007094">
    <property type="entry name" value="RNA-dir_pol_PSvirus"/>
</dbReference>
<dbReference type="Pfam" id="PF00548">
    <property type="entry name" value="Peptidase_C3"/>
    <property type="match status" value="1"/>
</dbReference>
<dbReference type="Pfam" id="PF00680">
    <property type="entry name" value="RdRP_1"/>
    <property type="match status" value="1"/>
</dbReference>
<dbReference type="Pfam" id="PF00910">
    <property type="entry name" value="RNA_helicase"/>
    <property type="match status" value="1"/>
</dbReference>
<dbReference type="PRINTS" id="PR00918">
    <property type="entry name" value="CALICVIRUSNS"/>
</dbReference>
<dbReference type="SUPFAM" id="SSF56672">
    <property type="entry name" value="DNA/RNA polymerases"/>
    <property type="match status" value="1"/>
</dbReference>
<dbReference type="SUPFAM" id="SSF50494">
    <property type="entry name" value="Trypsin-like serine proteases"/>
    <property type="match status" value="1"/>
</dbReference>
<dbReference type="PROSITE" id="PS51874">
    <property type="entry name" value="PCV_3C_PRO"/>
    <property type="match status" value="1"/>
</dbReference>
<dbReference type="PROSITE" id="PS50507">
    <property type="entry name" value="RDRP_SSRNA_POS"/>
    <property type="match status" value="1"/>
</dbReference>
<dbReference type="PROSITE" id="PS51218">
    <property type="entry name" value="SF3_HELICASE_2"/>
    <property type="match status" value="1"/>
</dbReference>
<gene>
    <name type="primary">RNA1</name>
</gene>
<evidence type="ECO:0000250" key="1">
    <source>
        <dbReference type="UniProtKB" id="P03600"/>
    </source>
</evidence>
<evidence type="ECO:0000255" key="2"/>
<evidence type="ECO:0000255" key="3">
    <source>
        <dbReference type="PROSITE-ProRule" id="PRU00539"/>
    </source>
</evidence>
<evidence type="ECO:0000255" key="4">
    <source>
        <dbReference type="PROSITE-ProRule" id="PRU00551"/>
    </source>
</evidence>
<evidence type="ECO:0000255" key="5">
    <source>
        <dbReference type="PROSITE-ProRule" id="PRU01222"/>
    </source>
</evidence>
<proteinExistence type="inferred from homology"/>
<sequence>MDSETIDMCVKFLKISFGLQSLKNLVKELFGGSELEKLAYVHAAFFHANEMAIHWNADLPWEEVMSSKRIKERFGYVKSHFLRNVVYNADASGQMIRYNTTTCEQWFCCNFNLASYSASYNSLVPEEGGSMPINEEAEIKIGQSLLTCAQSVTKAIYAKLSTLTTRSIQGFLECLRDAICGAFSSWLPCIRGAFAWFGNIIEVLKHWAGAAHEKLHNFLEGIEECLYMGLGLVASTCIVALIEKFLVTMSVISGPCGRPTLFLTSAMAIISSTYLLSKAVEKSSAFTMLLGFVTQSCQTVLGSLFGKSAKGSEEAQGQFGPSAMLESLATLVSSWSSSSVTEIGRTFGAISQIKNGIIALKDMALFVFSKLCEMASKVLGFESQILADLSIILGENVADWLDECDCMLAYLLEFNSNARDIFDRLSQLIEKGKAIRMGILRTTHRGPSQVLSLVTKALDKLTELHNSVIMSGANSTRKTPFMLFFTGKSGVGKTSVVQRMAANWLQQEQLGSNEVYSRNGLDPFWSGYKRQAVVTYDDFGAVPGSVSNEAEIINVVSSNPHSVMMADLKEKGMYFDSRLIIASSNFLAANPESGVHDSEAYERRRHVVVQVSLKEDMAYDPGNPCANQRYTLLESKAPFAEKAVFESYEELWSHVYNAFKAHEEKEKLFLSSLPIPERSEKEALQALIGICVMTTSYAPKAVIQYGIDHLVGYHYLISSAEHVYFWHEKGEVEIVPMHLMKLDKMDKATMASTSLKSALMCQDMAKNFPTLNPLAVLYAKNIVIRGWVDANLQASKKCEDSYMREQIESLPKWQRAYLHVLSGHIASNETRGWFLNCLEVTKSNSRSSYIWEYKSWPMPLKLALGSFLAILAGSAIFCSLQSLWSISGNASFVAGAASIFTIGSATAQSAPPNKDGSEYTYRNKKIKIRNWEGQGPCFGDSALWIAENCMATLVVMKDRVQVCMAPGRSFLGVNHFLRMIPNGVMVKLETGMTETYFVWEKSKLKLFENSEIALYTSSNLPKAPDSLVDRFHFDLETLPKTFPAQFFTYKFDKDMQQYVPELGELLCKKAERALCVVSGEYRRVISHHLTYRNPTVAGDCGGLVLAIIEGKCKLVGLHVASDGEEGAASPVPWDPDFKVAQGQSDFLLSYDEWAVPKVLGPGCKAVGIISPEHTVGSGGKTSFLETPIEWQLNRPCGKIPSILVKGDVRLAGTENADYDPFAVGMTKYAKEAGPFEPNGLDRVCESIAETWHDASDGFEFGPVDLEAALNGIENMEYFDALVLSTSEGYPYRLDRKPGEKGKARYVEGEPGNLEITDERILADIHWFEEISKTQVPDLYCIECVKDERLPVRKVIKEPKSRLFTVLPMSYNLAIRKKFLNFVRFIMKRRDVLPCQVGINPYSRQWGKVADRLLEKGNSILCCDYSRFDGFLPKCIMVKIAEMFSNIVGETGAEREQTKNLMLACCSRYAICGRVLYRVENGIPSGFPLTVIVNSILNEILIKYAYWKCFETESLIRDHFDTYVAMVVYGDDNLISVSEAISSKFNGNFLVNFMCNLGIKVTDGVDKTKVGIEFRTIEDCDFLKRKFKENADGTWSGVMAEEHLWPQLHFVKAKKVEMSEAYISNCNNILRELWLGSPEKAAAFRREVISKLKWVEPQRLLTISQVALFHNEQMNGEHPFVEACHQLENLELMAPLEPGMLPIKTQEIMPGLFVASEKNFTGNFDDYFTISITTNRKFEDGKGFQIIFPYGAGRGGLPSKAFMEQNVIRKGCAIQKAFKQGLEKGNKMLFISQSSVIPAYVFAIMLYRSVDRLPRALSNKALTSALGICKKLSYLPKDFPDLF</sequence>
<organism>
    <name type="scientific">Broad bean wilt virus 1 (strain Spinach/United States/ATCC PV-132/1963)</name>
    <name type="common">BBWV-1</name>
    <dbReference type="NCBI Taxonomy" id="649895"/>
    <lineage>
        <taxon>Viruses</taxon>
        <taxon>Riboviria</taxon>
        <taxon>Orthornavirae</taxon>
        <taxon>Pisuviricota</taxon>
        <taxon>Pisoniviricetes</taxon>
        <taxon>Picornavirales</taxon>
        <taxon>Secoviridae</taxon>
        <taxon>Comovirinae</taxon>
        <taxon>Fabavirus</taxon>
        <taxon>Fabavirus alphaviciae</taxon>
    </lineage>
</organism>
<reference key="1">
    <citation type="journal article" date="2003" name="J. Gen. Plant Pathol.">
        <title>Analysis of genetic relations between Broad bean wilt virus 1 and Broad bean wilt virus 2.</title>
        <authorList>
            <person name="Kobayashi Y.O."/>
            <person name="Kobayashi A."/>
            <person name="Nakano M."/>
            <person name="Hagiwara K."/>
            <person name="Honda Y."/>
            <person name="Omura T."/>
        </authorList>
    </citation>
    <scope>NUCLEOTIDE SEQUENCE [GENOMIC RNA]</scope>
</reference>
<keyword id="KW-0067">ATP-binding</keyword>
<keyword id="KW-0191">Covalent protein-RNA linkage</keyword>
<keyword id="KW-0347">Helicase</keyword>
<keyword id="KW-1035">Host cytoplasm</keyword>
<keyword id="KW-1038">Host endoplasmic reticulum</keyword>
<keyword id="KW-1043">Host membrane</keyword>
<keyword id="KW-0378">Hydrolase</keyword>
<keyword id="KW-0472">Membrane</keyword>
<keyword id="KW-0547">Nucleotide-binding</keyword>
<keyword id="KW-0548">Nucleotidyltransferase</keyword>
<keyword id="KW-0597">Phosphoprotein</keyword>
<keyword id="KW-0645">Protease</keyword>
<keyword id="KW-1185">Reference proteome</keyword>
<keyword id="KW-0696">RNA-directed RNA polymerase</keyword>
<keyword id="KW-0788">Thiol protease</keyword>
<keyword id="KW-0808">Transferase</keyword>
<keyword id="KW-0812">Transmembrane</keyword>
<keyword id="KW-1133">Transmembrane helix</keyword>
<keyword id="KW-0693">Viral RNA replication</keyword>
<protein>
    <recommendedName>
        <fullName>RNA1 polyprotein</fullName>
    </recommendedName>
    <alternativeName>
        <fullName>Genome polyprotein B</fullName>
    </alternativeName>
    <component>
        <recommendedName>
            <fullName>Protease cofactor</fullName>
        </recommendedName>
    </component>
    <component>
        <recommendedName>
            <fullName>Putative helicase</fullName>
            <ecNumber>3.6.4.-</ecNumber>
        </recommendedName>
        <alternativeName>
            <fullName>Membrane-binding protein</fullName>
        </alternativeName>
        <alternativeName>
            <fullName>NTP-binding protein</fullName>
            <shortName>NTB</shortName>
        </alternativeName>
    </component>
    <component>
        <recommendedName>
            <fullName>Viral genome-linked protein</fullName>
        </recommendedName>
        <alternativeName>
            <fullName>VPg</fullName>
        </alternativeName>
    </component>
    <component>
        <recommendedName>
            <fullName>Picornain 3C-like protease</fullName>
            <shortName>3C-like protease</shortName>
            <ecNumber evidence="1">3.4.22.-</ecNumber>
        </recommendedName>
    </component>
    <component>
        <recommendedName>
            <fullName evidence="3">RNA-directed RNA polymerase</fullName>
            <ecNumber evidence="3">2.7.7.48</ecNumber>
        </recommendedName>
    </component>
</protein>